<keyword id="KW-0131">Cell cycle</keyword>
<keyword id="KW-0132">Cell division</keyword>
<keyword id="KW-0238">DNA-binding</keyword>
<comment type="function">
    <text evidence="1">Involved in cell division and chromosome segregation.</text>
</comment>
<comment type="similarity">
    <text evidence="1">Belongs to the WhiA family.</text>
</comment>
<feature type="chain" id="PRO_1000215257" description="Probable cell division protein WhiA">
    <location>
        <begin position="1"/>
        <end position="320"/>
    </location>
</feature>
<feature type="DNA-binding region" description="H-T-H motif" evidence="1">
    <location>
        <begin position="276"/>
        <end position="310"/>
    </location>
</feature>
<evidence type="ECO:0000255" key="1">
    <source>
        <dbReference type="HAMAP-Rule" id="MF_01420"/>
    </source>
</evidence>
<protein>
    <recommendedName>
        <fullName evidence="1">Probable cell division protein WhiA</fullName>
    </recommendedName>
</protein>
<reference key="1">
    <citation type="submission" date="2009-06" db="EMBL/GenBank/DDBJ databases">
        <title>Complete sequence of chromosome of Geopacillus sp. WCH70.</title>
        <authorList>
            <consortium name="US DOE Joint Genome Institute"/>
            <person name="Lucas S."/>
            <person name="Copeland A."/>
            <person name="Lapidus A."/>
            <person name="Glavina del Rio T."/>
            <person name="Dalin E."/>
            <person name="Tice H."/>
            <person name="Bruce D."/>
            <person name="Goodwin L."/>
            <person name="Pitluck S."/>
            <person name="Chertkov O."/>
            <person name="Brettin T."/>
            <person name="Detter J.C."/>
            <person name="Han C."/>
            <person name="Larimer F."/>
            <person name="Land M."/>
            <person name="Hauser L."/>
            <person name="Kyrpides N."/>
            <person name="Mikhailova N."/>
            <person name="Brumm P."/>
            <person name="Mead D.A."/>
            <person name="Richardson P."/>
        </authorList>
    </citation>
    <scope>NUCLEOTIDE SEQUENCE [LARGE SCALE GENOMIC DNA]</scope>
    <source>
        <strain>WCH70</strain>
    </source>
</reference>
<gene>
    <name evidence="1" type="primary">whiA</name>
    <name type="ordered locus">GWCH70_2968</name>
</gene>
<name>WHIA_GEOSW</name>
<sequence>MSFASETKKELTNLEVKPCCLKAELSALLRMNGLLSFSNQQILVDVQTENAAIARRIYTLLKKGYTVTVELLVRKKMRLKKNNVYIVRIIDGAHELLKDLKILKEDFSLIRVISPELVKKKCCKRSYLRGAFLAGGSVNNPETSSYHLEIFSLYEEHNNSLCELMNSHFFLNAKTLERKKGFITYLKEAEKISEFLNIIGAHQALLRFEDIRIVRDMRNSVNRLVNCETANLNKTIGAALRQVENIRYIDETIGLSALPDKLREIAELRMMYQDVTLKELGELVSGGKISKSGINHRLRKIDEIAERLRAGKPVDFHKSL</sequence>
<accession>C5D7N1</accession>
<proteinExistence type="inferred from homology"/>
<dbReference type="EMBL" id="CP001638">
    <property type="protein sequence ID" value="ACS25641.1"/>
    <property type="molecule type" value="Genomic_DNA"/>
</dbReference>
<dbReference type="SMR" id="C5D7N1"/>
<dbReference type="STRING" id="471223.GWCH70_2968"/>
<dbReference type="KEGG" id="gwc:GWCH70_2968"/>
<dbReference type="eggNOG" id="COG1481">
    <property type="taxonomic scope" value="Bacteria"/>
</dbReference>
<dbReference type="HOGENOM" id="CLU_053282_0_0_9"/>
<dbReference type="OrthoDB" id="401278at2"/>
<dbReference type="GO" id="GO:0003677">
    <property type="term" value="F:DNA binding"/>
    <property type="evidence" value="ECO:0007669"/>
    <property type="project" value="UniProtKB-UniRule"/>
</dbReference>
<dbReference type="GO" id="GO:0051301">
    <property type="term" value="P:cell division"/>
    <property type="evidence" value="ECO:0007669"/>
    <property type="project" value="UniProtKB-UniRule"/>
</dbReference>
<dbReference type="GO" id="GO:0043937">
    <property type="term" value="P:regulation of sporulation"/>
    <property type="evidence" value="ECO:0007669"/>
    <property type="project" value="InterPro"/>
</dbReference>
<dbReference type="FunFam" id="3.10.28.10:FF:000002">
    <property type="entry name" value="Probable cell division protein WhiA"/>
    <property type="match status" value="1"/>
</dbReference>
<dbReference type="Gene3D" id="3.10.28.10">
    <property type="entry name" value="Homing endonucleases"/>
    <property type="match status" value="1"/>
</dbReference>
<dbReference type="HAMAP" id="MF_01420">
    <property type="entry name" value="HTH_type_WhiA"/>
    <property type="match status" value="1"/>
</dbReference>
<dbReference type="InterPro" id="IPR027434">
    <property type="entry name" value="Homing_endonucl"/>
</dbReference>
<dbReference type="InterPro" id="IPR018478">
    <property type="entry name" value="Sporu_reg_WhiA_N_dom"/>
</dbReference>
<dbReference type="InterPro" id="IPR003802">
    <property type="entry name" value="Sporulation_regulator_WhiA"/>
</dbReference>
<dbReference type="InterPro" id="IPR023054">
    <property type="entry name" value="Sporulation_regulator_WhiA_C"/>
</dbReference>
<dbReference type="InterPro" id="IPR039518">
    <property type="entry name" value="WhiA_LAGLIDADG_dom"/>
</dbReference>
<dbReference type="NCBIfam" id="TIGR00647">
    <property type="entry name" value="DNA_bind_WhiA"/>
    <property type="match status" value="1"/>
</dbReference>
<dbReference type="PANTHER" id="PTHR37307">
    <property type="entry name" value="CELL DIVISION PROTEIN WHIA-RELATED"/>
    <property type="match status" value="1"/>
</dbReference>
<dbReference type="PANTHER" id="PTHR37307:SF1">
    <property type="entry name" value="CELL DIVISION PROTEIN WHIA-RELATED"/>
    <property type="match status" value="1"/>
</dbReference>
<dbReference type="Pfam" id="PF02650">
    <property type="entry name" value="HTH_WhiA"/>
    <property type="match status" value="1"/>
</dbReference>
<dbReference type="Pfam" id="PF14527">
    <property type="entry name" value="LAGLIDADG_WhiA"/>
    <property type="match status" value="1"/>
</dbReference>
<dbReference type="Pfam" id="PF10298">
    <property type="entry name" value="WhiA_N"/>
    <property type="match status" value="1"/>
</dbReference>
<dbReference type="SUPFAM" id="SSF55608">
    <property type="entry name" value="Homing endonucleases"/>
    <property type="match status" value="1"/>
</dbReference>
<organism>
    <name type="scientific">Geobacillus sp. (strain WCH70)</name>
    <dbReference type="NCBI Taxonomy" id="471223"/>
    <lineage>
        <taxon>Bacteria</taxon>
        <taxon>Bacillati</taxon>
        <taxon>Bacillota</taxon>
        <taxon>Bacilli</taxon>
        <taxon>Bacillales</taxon>
        <taxon>Anoxybacillaceae</taxon>
        <taxon>Geobacillus</taxon>
    </lineage>
</organism>